<name>SFNAD_STAA8</name>
<dbReference type="EC" id="6.3.2.58" evidence="1"/>
<dbReference type="EMBL" id="CP000253">
    <property type="protein sequence ID" value="ABD31458.1"/>
    <property type="molecule type" value="Genomic_DNA"/>
</dbReference>
<dbReference type="RefSeq" id="WP_001052567.1">
    <property type="nucleotide sequence ID" value="NZ_LS483365.1"/>
</dbReference>
<dbReference type="RefSeq" id="YP_500905.1">
    <property type="nucleotide sequence ID" value="NC_007795.1"/>
</dbReference>
<dbReference type="SMR" id="Q2FW70"/>
<dbReference type="STRING" id="93061.SAOUHSC_02436"/>
<dbReference type="PaxDb" id="1280-SAXN108_2429"/>
<dbReference type="GeneID" id="3919001"/>
<dbReference type="KEGG" id="sao:SAOUHSC_02436"/>
<dbReference type="PATRIC" id="fig|93061.5.peg.2197"/>
<dbReference type="eggNOG" id="COG4264">
    <property type="taxonomic scope" value="Bacteria"/>
</dbReference>
<dbReference type="HOGENOM" id="CLU_018524_3_1_9"/>
<dbReference type="OrthoDB" id="495728at2"/>
<dbReference type="BioCyc" id="MetaCyc:MONOMER-20492"/>
<dbReference type="Proteomes" id="UP000008816">
    <property type="component" value="Chromosome"/>
</dbReference>
<dbReference type="GO" id="GO:0016881">
    <property type="term" value="F:acid-amino acid ligase activity"/>
    <property type="evidence" value="ECO:0000318"/>
    <property type="project" value="GO_Central"/>
</dbReference>
<dbReference type="GO" id="GO:0005524">
    <property type="term" value="F:ATP binding"/>
    <property type="evidence" value="ECO:0007669"/>
    <property type="project" value="UniProtKB-KW"/>
</dbReference>
<dbReference type="GO" id="GO:0019290">
    <property type="term" value="P:siderophore biosynthetic process"/>
    <property type="evidence" value="ECO:0000318"/>
    <property type="project" value="GO_Central"/>
</dbReference>
<dbReference type="Gene3D" id="1.10.510.40">
    <property type="match status" value="1"/>
</dbReference>
<dbReference type="InterPro" id="IPR007310">
    <property type="entry name" value="Aerobactin_biosyn_IucA/IucC_N"/>
</dbReference>
<dbReference type="InterPro" id="IPR022770">
    <property type="entry name" value="IucA/IucC-like_C"/>
</dbReference>
<dbReference type="InterPro" id="IPR037455">
    <property type="entry name" value="LucA/IucC-like"/>
</dbReference>
<dbReference type="PANTHER" id="PTHR34384">
    <property type="entry name" value="L-2,3-DIAMINOPROPANOATE--CITRATE LIGASE"/>
    <property type="match status" value="1"/>
</dbReference>
<dbReference type="PANTHER" id="PTHR34384:SF6">
    <property type="entry name" value="STAPHYLOFERRIN B SYNTHASE"/>
    <property type="match status" value="1"/>
</dbReference>
<dbReference type="Pfam" id="PF06276">
    <property type="entry name" value="FhuF"/>
    <property type="match status" value="1"/>
</dbReference>
<dbReference type="Pfam" id="PF04183">
    <property type="entry name" value="IucA_IucC"/>
    <property type="match status" value="1"/>
</dbReference>
<keyword id="KW-0067">ATP-binding</keyword>
<keyword id="KW-0436">Ligase</keyword>
<keyword id="KW-0547">Nucleotide-binding</keyword>
<keyword id="KW-1185">Reference proteome</keyword>
<comment type="function">
    <text evidence="1">Involved in the biosynthesis of the siderophore staphyloferrin A. Catalyzes the ATP-dependent condensation of D-ornithine and citrate to form a citryl-D-ornithine intermediate.</text>
</comment>
<comment type="catalytic activity">
    <reaction evidence="1">
        <text>D-ornithine + citrate + ATP = N(5)-[(S)-citryl]-D-ornithine + AMP + diphosphate + H(+)</text>
        <dbReference type="Rhea" id="RHEA:59136"/>
        <dbReference type="ChEBI" id="CHEBI:15378"/>
        <dbReference type="ChEBI" id="CHEBI:16947"/>
        <dbReference type="ChEBI" id="CHEBI:30616"/>
        <dbReference type="ChEBI" id="CHEBI:33019"/>
        <dbReference type="ChEBI" id="CHEBI:57668"/>
        <dbReference type="ChEBI" id="CHEBI:142972"/>
        <dbReference type="ChEBI" id="CHEBI:456215"/>
        <dbReference type="EC" id="6.3.2.58"/>
    </reaction>
    <physiologicalReaction direction="left-to-right" evidence="1">
        <dbReference type="Rhea" id="RHEA:59137"/>
    </physiologicalReaction>
</comment>
<comment type="pathway">
    <text evidence="1">Siderophore biosynthesis.</text>
</comment>
<comment type="similarity">
    <text evidence="3">Belongs to the IucA/IucC family.</text>
</comment>
<gene>
    <name evidence="2" type="primary">sfnaD</name>
    <name evidence="4" type="ordered locus">SAOUHSC_02436</name>
</gene>
<organism>
    <name type="scientific">Staphylococcus aureus (strain NCTC 8325 / PS 47)</name>
    <dbReference type="NCBI Taxonomy" id="93061"/>
    <lineage>
        <taxon>Bacteria</taxon>
        <taxon>Bacillati</taxon>
        <taxon>Bacillota</taxon>
        <taxon>Bacilli</taxon>
        <taxon>Bacillales</taxon>
        <taxon>Staphylococcaceae</taxon>
        <taxon>Staphylococcus</taxon>
    </lineage>
</organism>
<feature type="chain" id="PRO_0000453635" description="D-ornithine--citrate ligase">
    <location>
        <begin position="1"/>
        <end position="658"/>
    </location>
</feature>
<sequence>MNLNLIFKEQTLKFNKEEQETYLFLQQHNSDWANIFKEMILQGRDKVTQRLVTSMHRENLVKARTQSKKILSRDLIMLDISTTHILEIQFPQAKQTLYAPITGEHAFDRIDVEGPFYIKDDITNTITRVHHPNEILECILIEAPDLKNAASDQFQQDLINSATNMTFAISYQALSMQHDSAPLFNIIENSEDSYLRSEQAVIEGHPLHPGAKLRKGLNALQTFLYSSEFNQPIKLKIVLIHSKLSRTMSLSKDYDTTVHQLFPDLIKQLENEFTPKFNFNDYHIMIVHPWQLDDVLHSDYQAEVDKELIIEAKHTLDYYAGLSFRTLVPKYPAMSPHIKLSTNVHITGEIRTLSEQTTHNGPLMTRILNDILEKDVIFKSYASTIIDEVAGIHFYNEQDEADYQTERSEQLGTLFRKNIYQMIPQEVTPLIPSSLVATYPFNNESPIVTLIKRYQSAASLSDFESSAKSWVETYSKALLGLVIPLVTKYGIALEAHLQNAIATFRKDGLLDTMYIRDFEGLRIDKAQLNEMVYSTSHFHEKSRILTDSKTSVFNKAFYSTVQNHLGELILTISKASNDSNLERHMWYIVRDVLDNIFDQLVLSTHKSNQVNENRINEIKDTMFAPFIDYKCVTTMRLEDEAHHYTYIKVNNPLYRENN</sequence>
<accession>Q2FW70</accession>
<proteinExistence type="evidence at protein level"/>
<protein>
    <recommendedName>
        <fullName evidence="3">D-ornithine--citrate ligase</fullName>
        <ecNumber evidence="1">6.3.2.58</ecNumber>
    </recommendedName>
</protein>
<evidence type="ECO:0000269" key="1">
    <source>
    </source>
</evidence>
<evidence type="ECO:0000303" key="2">
    <source>
    </source>
</evidence>
<evidence type="ECO:0000305" key="3"/>
<evidence type="ECO:0000312" key="4">
    <source>
        <dbReference type="EMBL" id="ABD31458.1"/>
    </source>
</evidence>
<reference key="1">
    <citation type="book" date="2006" name="Gram positive pathogens, 2nd edition">
        <title>The Staphylococcus aureus NCTC 8325 genome.</title>
        <editorList>
            <person name="Fischetti V."/>
            <person name="Novick R."/>
            <person name="Ferretti J."/>
            <person name="Portnoy D."/>
            <person name="Rood J."/>
        </editorList>
        <authorList>
            <person name="Gillaspy A.F."/>
            <person name="Worrell V."/>
            <person name="Orvis J."/>
            <person name="Roe B.A."/>
            <person name="Dyer D.W."/>
            <person name="Iandolo J.J."/>
        </authorList>
    </citation>
    <scope>NUCLEOTIDE SEQUENCE [LARGE SCALE GENOMIC DNA]</scope>
    <source>
        <strain>NCTC 8325 / PS 47</strain>
    </source>
</reference>
<reference key="2">
    <citation type="journal article" date="2009" name="Biochemistry">
        <title>Identification and characterization of the Staphylococcus aureus gene cluster coding for staphyloferrin A.</title>
        <authorList>
            <person name="Cotton J.L."/>
            <person name="Tao J."/>
            <person name="Balibar C.J."/>
        </authorList>
    </citation>
    <scope>FUNCTION</scope>
    <scope>CATALYTIC ACTIVITY</scope>
    <scope>PATHWAY</scope>
    <source>
        <strain>RN4220</strain>
    </source>
</reference>